<proteinExistence type="inferred from homology"/>
<accession>Q5H0A4</accession>
<protein>
    <recommendedName>
        <fullName evidence="1">Pantothenate synthetase</fullName>
        <shortName evidence="1">PS</shortName>
        <ecNumber evidence="1">6.3.2.1</ecNumber>
    </recommendedName>
    <alternativeName>
        <fullName evidence="1">Pantoate--beta-alanine ligase</fullName>
    </alternativeName>
    <alternativeName>
        <fullName evidence="1">Pantoate-activating enzyme</fullName>
    </alternativeName>
</protein>
<feature type="chain" id="PRO_0000128292" description="Pantothenate synthetase">
    <location>
        <begin position="1"/>
        <end position="280"/>
    </location>
</feature>
<feature type="active site" description="Proton donor" evidence="1">
    <location>
        <position position="38"/>
    </location>
</feature>
<feature type="binding site" evidence="1">
    <location>
        <begin position="31"/>
        <end position="38"/>
    </location>
    <ligand>
        <name>ATP</name>
        <dbReference type="ChEBI" id="CHEBI:30616"/>
    </ligand>
</feature>
<feature type="binding site" evidence="1">
    <location>
        <position position="62"/>
    </location>
    <ligand>
        <name>(R)-pantoate</name>
        <dbReference type="ChEBI" id="CHEBI:15980"/>
    </ligand>
</feature>
<feature type="binding site" evidence="1">
    <location>
        <position position="62"/>
    </location>
    <ligand>
        <name>beta-alanine</name>
        <dbReference type="ChEBI" id="CHEBI:57966"/>
    </ligand>
</feature>
<feature type="binding site" evidence="1">
    <location>
        <begin position="150"/>
        <end position="153"/>
    </location>
    <ligand>
        <name>ATP</name>
        <dbReference type="ChEBI" id="CHEBI:30616"/>
    </ligand>
</feature>
<feature type="binding site" evidence="1">
    <location>
        <position position="156"/>
    </location>
    <ligand>
        <name>(R)-pantoate</name>
        <dbReference type="ChEBI" id="CHEBI:15980"/>
    </ligand>
</feature>
<feature type="binding site" evidence="1">
    <location>
        <position position="179"/>
    </location>
    <ligand>
        <name>ATP</name>
        <dbReference type="ChEBI" id="CHEBI:30616"/>
    </ligand>
</feature>
<feature type="binding site" evidence="1">
    <location>
        <begin position="187"/>
        <end position="190"/>
    </location>
    <ligand>
        <name>ATP</name>
        <dbReference type="ChEBI" id="CHEBI:30616"/>
    </ligand>
</feature>
<sequence>MIQTLTDLSALRALVNGWKREGLRVALVPTMGNLHVGHYSLVMLARQYADRVVSSVFVNPTQFGPNEDFACYPRTPEADLRGLEDAGCDALWLPDVDTMYPLGTALATPIHAPGVSDVLEGECRPGHFDGVCTVVARLFNQVQPDVAAFGKKDYQQLAVIRQMVADLAFPIEILGGSIVREADGLAMSSRNQYLSAEERPISANIHKVLLQMRDSYAVGTPRAQVEDAASHALEQAGFRVDYAVVRLPDLSEPGDGHTGAHVALIAARLGSTRLIDNLEF</sequence>
<evidence type="ECO:0000255" key="1">
    <source>
        <dbReference type="HAMAP-Rule" id="MF_00158"/>
    </source>
</evidence>
<name>PANC_XANOR</name>
<reference key="1">
    <citation type="journal article" date="2005" name="Nucleic Acids Res.">
        <title>The genome sequence of Xanthomonas oryzae pathovar oryzae KACC10331, the bacterial blight pathogen of rice.</title>
        <authorList>
            <person name="Lee B.-M."/>
            <person name="Park Y.-J."/>
            <person name="Park D.-S."/>
            <person name="Kang H.-W."/>
            <person name="Kim J.-G."/>
            <person name="Song E.-S."/>
            <person name="Park I.-C."/>
            <person name="Yoon U.-H."/>
            <person name="Hahn J.-H."/>
            <person name="Koo B.-S."/>
            <person name="Lee G.-B."/>
            <person name="Kim H."/>
            <person name="Park H.-S."/>
            <person name="Yoon K.-O."/>
            <person name="Kim J.-H."/>
            <person name="Jung C.-H."/>
            <person name="Koh N.-H."/>
            <person name="Seo J.-S."/>
            <person name="Go S.-J."/>
        </authorList>
    </citation>
    <scope>NUCLEOTIDE SEQUENCE [LARGE SCALE GENOMIC DNA]</scope>
    <source>
        <strain>KACC10331 / KXO85</strain>
    </source>
</reference>
<keyword id="KW-0067">ATP-binding</keyword>
<keyword id="KW-0963">Cytoplasm</keyword>
<keyword id="KW-0436">Ligase</keyword>
<keyword id="KW-0547">Nucleotide-binding</keyword>
<keyword id="KW-0566">Pantothenate biosynthesis</keyword>
<keyword id="KW-1185">Reference proteome</keyword>
<dbReference type="EC" id="6.3.2.1" evidence="1"/>
<dbReference type="EMBL" id="AE013598">
    <property type="protein sequence ID" value="AAW75617.1"/>
    <property type="molecule type" value="Genomic_DNA"/>
</dbReference>
<dbReference type="SMR" id="Q5H0A4"/>
<dbReference type="STRING" id="291331.XOO2363"/>
<dbReference type="KEGG" id="xoo:XOO2363"/>
<dbReference type="PATRIC" id="fig|291331.8.peg.2628"/>
<dbReference type="HOGENOM" id="CLU_047148_0_0_6"/>
<dbReference type="UniPathway" id="UPA00028">
    <property type="reaction ID" value="UER00005"/>
</dbReference>
<dbReference type="Proteomes" id="UP000006735">
    <property type="component" value="Chromosome"/>
</dbReference>
<dbReference type="GO" id="GO:0005829">
    <property type="term" value="C:cytosol"/>
    <property type="evidence" value="ECO:0007669"/>
    <property type="project" value="TreeGrafter"/>
</dbReference>
<dbReference type="GO" id="GO:0005524">
    <property type="term" value="F:ATP binding"/>
    <property type="evidence" value="ECO:0007669"/>
    <property type="project" value="UniProtKB-KW"/>
</dbReference>
<dbReference type="GO" id="GO:0004592">
    <property type="term" value="F:pantoate-beta-alanine ligase activity"/>
    <property type="evidence" value="ECO:0007669"/>
    <property type="project" value="UniProtKB-UniRule"/>
</dbReference>
<dbReference type="GO" id="GO:0015940">
    <property type="term" value="P:pantothenate biosynthetic process"/>
    <property type="evidence" value="ECO:0007669"/>
    <property type="project" value="UniProtKB-UniRule"/>
</dbReference>
<dbReference type="CDD" id="cd00560">
    <property type="entry name" value="PanC"/>
    <property type="match status" value="1"/>
</dbReference>
<dbReference type="FunFam" id="3.40.50.620:FF:000114">
    <property type="entry name" value="Pantothenate synthetase"/>
    <property type="match status" value="1"/>
</dbReference>
<dbReference type="Gene3D" id="3.40.50.620">
    <property type="entry name" value="HUPs"/>
    <property type="match status" value="1"/>
</dbReference>
<dbReference type="Gene3D" id="3.30.1300.10">
    <property type="entry name" value="Pantoate-beta-alanine ligase, C-terminal domain"/>
    <property type="match status" value="1"/>
</dbReference>
<dbReference type="HAMAP" id="MF_00158">
    <property type="entry name" value="PanC"/>
    <property type="match status" value="1"/>
</dbReference>
<dbReference type="InterPro" id="IPR003721">
    <property type="entry name" value="Pantoate_ligase"/>
</dbReference>
<dbReference type="InterPro" id="IPR042176">
    <property type="entry name" value="Pantoate_ligase_C"/>
</dbReference>
<dbReference type="InterPro" id="IPR014729">
    <property type="entry name" value="Rossmann-like_a/b/a_fold"/>
</dbReference>
<dbReference type="NCBIfam" id="TIGR00018">
    <property type="entry name" value="panC"/>
    <property type="match status" value="1"/>
</dbReference>
<dbReference type="PANTHER" id="PTHR21299">
    <property type="entry name" value="CYTIDYLATE KINASE/PANTOATE-BETA-ALANINE LIGASE"/>
    <property type="match status" value="1"/>
</dbReference>
<dbReference type="PANTHER" id="PTHR21299:SF1">
    <property type="entry name" value="PANTOATE--BETA-ALANINE LIGASE"/>
    <property type="match status" value="1"/>
</dbReference>
<dbReference type="Pfam" id="PF02569">
    <property type="entry name" value="Pantoate_ligase"/>
    <property type="match status" value="1"/>
</dbReference>
<dbReference type="SUPFAM" id="SSF52374">
    <property type="entry name" value="Nucleotidylyl transferase"/>
    <property type="match status" value="1"/>
</dbReference>
<gene>
    <name evidence="1" type="primary">panC</name>
    <name type="ordered locus">XOO2363</name>
</gene>
<organism>
    <name type="scientific">Xanthomonas oryzae pv. oryzae (strain KACC10331 / KXO85)</name>
    <dbReference type="NCBI Taxonomy" id="291331"/>
    <lineage>
        <taxon>Bacteria</taxon>
        <taxon>Pseudomonadati</taxon>
        <taxon>Pseudomonadota</taxon>
        <taxon>Gammaproteobacteria</taxon>
        <taxon>Lysobacterales</taxon>
        <taxon>Lysobacteraceae</taxon>
        <taxon>Xanthomonas</taxon>
    </lineage>
</organism>
<comment type="function">
    <text evidence="1">Catalyzes the condensation of pantoate with beta-alanine in an ATP-dependent reaction via a pantoyl-adenylate intermediate.</text>
</comment>
<comment type="catalytic activity">
    <reaction evidence="1">
        <text>(R)-pantoate + beta-alanine + ATP = (R)-pantothenate + AMP + diphosphate + H(+)</text>
        <dbReference type="Rhea" id="RHEA:10912"/>
        <dbReference type="ChEBI" id="CHEBI:15378"/>
        <dbReference type="ChEBI" id="CHEBI:15980"/>
        <dbReference type="ChEBI" id="CHEBI:29032"/>
        <dbReference type="ChEBI" id="CHEBI:30616"/>
        <dbReference type="ChEBI" id="CHEBI:33019"/>
        <dbReference type="ChEBI" id="CHEBI:57966"/>
        <dbReference type="ChEBI" id="CHEBI:456215"/>
        <dbReference type="EC" id="6.3.2.1"/>
    </reaction>
</comment>
<comment type="pathway">
    <text evidence="1">Cofactor biosynthesis; (R)-pantothenate biosynthesis; (R)-pantothenate from (R)-pantoate and beta-alanine: step 1/1.</text>
</comment>
<comment type="subunit">
    <text evidence="1">Homodimer.</text>
</comment>
<comment type="subcellular location">
    <subcellularLocation>
        <location evidence="1">Cytoplasm</location>
    </subcellularLocation>
</comment>
<comment type="miscellaneous">
    <text evidence="1">The reaction proceeds by a bi uni uni bi ping pong mechanism.</text>
</comment>
<comment type="similarity">
    <text evidence="1">Belongs to the pantothenate synthetase family.</text>
</comment>